<dbReference type="EC" id="2.7.1.92" evidence="1"/>
<dbReference type="EMBL" id="CP000001">
    <property type="protein sequence ID" value="AAU18005.1"/>
    <property type="molecule type" value="Genomic_DNA"/>
</dbReference>
<dbReference type="RefSeq" id="WP_001068619.1">
    <property type="nucleotide sequence ID" value="NC_006274.1"/>
</dbReference>
<dbReference type="SMR" id="Q63B75"/>
<dbReference type="KEGG" id="bcz:BCE33L2252"/>
<dbReference type="PATRIC" id="fig|288681.22.peg.3247"/>
<dbReference type="UniPathway" id="UPA00076">
    <property type="reaction ID" value="UER00146"/>
</dbReference>
<dbReference type="Proteomes" id="UP000002612">
    <property type="component" value="Chromosome"/>
</dbReference>
<dbReference type="GO" id="GO:0047590">
    <property type="term" value="F:5-dehydro-2-deoxygluconokinase activity"/>
    <property type="evidence" value="ECO:0007669"/>
    <property type="project" value="UniProtKB-UniRule"/>
</dbReference>
<dbReference type="GO" id="GO:0005524">
    <property type="term" value="F:ATP binding"/>
    <property type="evidence" value="ECO:0007669"/>
    <property type="project" value="UniProtKB-UniRule"/>
</dbReference>
<dbReference type="GO" id="GO:0019310">
    <property type="term" value="P:inositol catabolic process"/>
    <property type="evidence" value="ECO:0007669"/>
    <property type="project" value="UniProtKB-UniRule"/>
</dbReference>
<dbReference type="CDD" id="cd01166">
    <property type="entry name" value="KdgK"/>
    <property type="match status" value="1"/>
</dbReference>
<dbReference type="Gene3D" id="3.40.1190.20">
    <property type="match status" value="1"/>
</dbReference>
<dbReference type="Gene3D" id="2.20.150.10">
    <property type="entry name" value="putative 5-dehydro-2- deoxygluconokinase"/>
    <property type="match status" value="1"/>
</dbReference>
<dbReference type="HAMAP" id="MF_01668">
    <property type="entry name" value="IolC"/>
    <property type="match status" value="1"/>
</dbReference>
<dbReference type="InterPro" id="IPR002173">
    <property type="entry name" value="Carboh/pur_kinase_PfkB_CS"/>
</dbReference>
<dbReference type="InterPro" id="IPR022841">
    <property type="entry name" value="DKG_kinase_firmi"/>
</dbReference>
<dbReference type="InterPro" id="IPR030830">
    <property type="entry name" value="Myo_inos_IolC"/>
</dbReference>
<dbReference type="InterPro" id="IPR023314">
    <property type="entry name" value="Myo_inos_IolC-like_sf"/>
</dbReference>
<dbReference type="InterPro" id="IPR050306">
    <property type="entry name" value="PfkB_Carbo_kinase"/>
</dbReference>
<dbReference type="InterPro" id="IPR011611">
    <property type="entry name" value="PfkB_dom"/>
</dbReference>
<dbReference type="InterPro" id="IPR029056">
    <property type="entry name" value="Ribokinase-like"/>
</dbReference>
<dbReference type="NCBIfam" id="TIGR04382">
    <property type="entry name" value="myo_inos_iolC_N"/>
    <property type="match status" value="1"/>
</dbReference>
<dbReference type="PANTHER" id="PTHR43085:SF49">
    <property type="entry name" value="5-DEHYDRO-2-DEOXYGLUCONOKINASE"/>
    <property type="match status" value="1"/>
</dbReference>
<dbReference type="PANTHER" id="PTHR43085">
    <property type="entry name" value="HEXOKINASE FAMILY MEMBER"/>
    <property type="match status" value="1"/>
</dbReference>
<dbReference type="Pfam" id="PF00294">
    <property type="entry name" value="PfkB"/>
    <property type="match status" value="1"/>
</dbReference>
<dbReference type="SUPFAM" id="SSF53613">
    <property type="entry name" value="Ribokinase-like"/>
    <property type="match status" value="1"/>
</dbReference>
<dbReference type="PROSITE" id="PS00584">
    <property type="entry name" value="PFKB_KINASES_2"/>
    <property type="match status" value="1"/>
</dbReference>
<feature type="chain" id="PRO_0000352286" description="5-dehydro-2-deoxygluconokinase 1">
    <location>
        <begin position="1"/>
        <end position="332"/>
    </location>
</feature>
<accession>Q63B75</accession>
<proteinExistence type="inferred from homology"/>
<comment type="function">
    <text evidence="1">Catalyzes the phosphorylation of 5-dehydro-2-deoxy-D-gluconate (2-deoxy-5-keto-D-gluconate or DKG) to 6-phospho-5-dehydro-2-deoxy-D-gluconate (DKGP).</text>
</comment>
<comment type="catalytic activity">
    <reaction evidence="1">
        <text>5-dehydro-2-deoxy-D-gluconate + ATP = 6-phospho-5-dehydro-2-deoxy-D-gluconate + ADP + H(+)</text>
        <dbReference type="Rhea" id="RHEA:13497"/>
        <dbReference type="ChEBI" id="CHEBI:15378"/>
        <dbReference type="ChEBI" id="CHEBI:16669"/>
        <dbReference type="ChEBI" id="CHEBI:30616"/>
        <dbReference type="ChEBI" id="CHEBI:57949"/>
        <dbReference type="ChEBI" id="CHEBI:456216"/>
        <dbReference type="EC" id="2.7.1.92"/>
    </reaction>
</comment>
<comment type="pathway">
    <text evidence="1">Polyol metabolism; myo-inositol degradation into acetyl-CoA; acetyl-CoA from myo-inositol: step 5/7.</text>
</comment>
<comment type="similarity">
    <text evidence="1">Belongs to the carbohydrate kinase PfkB family.</text>
</comment>
<organism>
    <name type="scientific">Bacillus cereus (strain ZK / E33L)</name>
    <dbReference type="NCBI Taxonomy" id="288681"/>
    <lineage>
        <taxon>Bacteria</taxon>
        <taxon>Bacillati</taxon>
        <taxon>Bacillota</taxon>
        <taxon>Bacilli</taxon>
        <taxon>Bacillales</taxon>
        <taxon>Bacillaceae</taxon>
        <taxon>Bacillus</taxon>
        <taxon>Bacillus cereus group</taxon>
    </lineage>
</organism>
<gene>
    <name evidence="1" type="primary">iolC1</name>
    <name type="ordered locus">BCE33L2252</name>
</gene>
<protein>
    <recommendedName>
        <fullName evidence="1">5-dehydro-2-deoxygluconokinase 1</fullName>
        <ecNumber evidence="1">2.7.1.92</ecNumber>
    </recommendedName>
    <alternativeName>
        <fullName evidence="1">2-deoxy-5-keto-D-gluconate kinase 1</fullName>
        <shortName evidence="1">DKG kinase 1</shortName>
    </alternativeName>
</protein>
<evidence type="ECO:0000255" key="1">
    <source>
        <dbReference type="HAMAP-Rule" id="MF_01668"/>
    </source>
</evidence>
<name>IOLC1_BACCZ</name>
<keyword id="KW-0067">ATP-binding</keyword>
<keyword id="KW-0418">Kinase</keyword>
<keyword id="KW-0547">Nucleotide-binding</keyword>
<keyword id="KW-0808">Transferase</keyword>
<reference key="1">
    <citation type="journal article" date="2006" name="J. Bacteriol.">
        <title>Pathogenomic sequence analysis of Bacillus cereus and Bacillus thuringiensis isolates closely related to Bacillus anthracis.</title>
        <authorList>
            <person name="Han C.S."/>
            <person name="Xie G."/>
            <person name="Challacombe J.F."/>
            <person name="Altherr M.R."/>
            <person name="Bhotika S.S."/>
            <person name="Bruce D."/>
            <person name="Campbell C.S."/>
            <person name="Campbell M.L."/>
            <person name="Chen J."/>
            <person name="Chertkov O."/>
            <person name="Cleland C."/>
            <person name="Dimitrijevic M."/>
            <person name="Doggett N.A."/>
            <person name="Fawcett J.J."/>
            <person name="Glavina T."/>
            <person name="Goodwin L.A."/>
            <person name="Hill K.K."/>
            <person name="Hitchcock P."/>
            <person name="Jackson P.J."/>
            <person name="Keim P."/>
            <person name="Kewalramani A.R."/>
            <person name="Longmire J."/>
            <person name="Lucas S."/>
            <person name="Malfatti S."/>
            <person name="McMurry K."/>
            <person name="Meincke L.J."/>
            <person name="Misra M."/>
            <person name="Moseman B.L."/>
            <person name="Mundt M."/>
            <person name="Munk A.C."/>
            <person name="Okinaka R.T."/>
            <person name="Parson-Quintana B."/>
            <person name="Reilly L.P."/>
            <person name="Richardson P."/>
            <person name="Robinson D.L."/>
            <person name="Rubin E."/>
            <person name="Saunders E."/>
            <person name="Tapia R."/>
            <person name="Tesmer J.G."/>
            <person name="Thayer N."/>
            <person name="Thompson L.S."/>
            <person name="Tice H."/>
            <person name="Ticknor L.O."/>
            <person name="Wills P.L."/>
            <person name="Brettin T.S."/>
            <person name="Gilna P."/>
        </authorList>
    </citation>
    <scope>NUCLEOTIDE SEQUENCE [LARGE SCALE GENOMIC DNA]</scope>
    <source>
        <strain>ZK / E33L</strain>
    </source>
</reference>
<sequence>MNPLIFKENRPFDLIAVGRLCVDLNANETQRPMEETRTFTKYVGGSPANIAIGAARLGLQTGFIGKVSDDQMGRFITGYLKDNKINTDQIRIDCTGAVTGLAFTEIKSPEDCSILMYRDNVADLNLDPTEVSEDYIKQSKALLISGTALAKSPSREAVFLALEYARKHDVVVFFDVDYRPYTWQSEAETAVYYNLAAEKSDVIIGTREEFDMMEKLLNYEQSNDQVTAERWFSHYAKIVVIKHGGDGSIAYTRDGQSHRGGIFKTKVLKTFGAGDSYASAFIYGLIQGLEIPQAMRLGGASASIVISKHSCSDAMPTRAEISAFMETAEELV</sequence>